<accession>A0QF52</accession>
<dbReference type="EC" id="2.4.1.227" evidence="1"/>
<dbReference type="EMBL" id="CP000479">
    <property type="protein sequence ID" value="ABK69036.1"/>
    <property type="molecule type" value="Genomic_DNA"/>
</dbReference>
<dbReference type="RefSeq" id="WP_011724732.1">
    <property type="nucleotide sequence ID" value="NC_008595.1"/>
</dbReference>
<dbReference type="SMR" id="A0QF52"/>
<dbReference type="CAZy" id="GT28">
    <property type="family name" value="Glycosyltransferase Family 28"/>
</dbReference>
<dbReference type="KEGG" id="mav:MAV_2336"/>
<dbReference type="HOGENOM" id="CLU_037404_1_0_11"/>
<dbReference type="UniPathway" id="UPA00219"/>
<dbReference type="Proteomes" id="UP000001574">
    <property type="component" value="Chromosome"/>
</dbReference>
<dbReference type="GO" id="GO:0005886">
    <property type="term" value="C:plasma membrane"/>
    <property type="evidence" value="ECO:0007669"/>
    <property type="project" value="UniProtKB-SubCell"/>
</dbReference>
<dbReference type="GO" id="GO:0051991">
    <property type="term" value="F:UDP-N-acetyl-D-glucosamine:N-acetylmuramoyl-L-alanyl-D-glutamyl-meso-2,6-diaminopimelyl-D-alanyl-D-alanine-diphosphoundecaprenol 4-beta-N-acetylglucosaminlytransferase activity"/>
    <property type="evidence" value="ECO:0007669"/>
    <property type="project" value="RHEA"/>
</dbReference>
<dbReference type="GO" id="GO:0050511">
    <property type="term" value="F:undecaprenyldiphospho-muramoylpentapeptide beta-N-acetylglucosaminyltransferase activity"/>
    <property type="evidence" value="ECO:0007669"/>
    <property type="project" value="UniProtKB-UniRule"/>
</dbReference>
<dbReference type="GO" id="GO:0005975">
    <property type="term" value="P:carbohydrate metabolic process"/>
    <property type="evidence" value="ECO:0007669"/>
    <property type="project" value="InterPro"/>
</dbReference>
<dbReference type="GO" id="GO:0051301">
    <property type="term" value="P:cell division"/>
    <property type="evidence" value="ECO:0007669"/>
    <property type="project" value="UniProtKB-KW"/>
</dbReference>
<dbReference type="GO" id="GO:0071555">
    <property type="term" value="P:cell wall organization"/>
    <property type="evidence" value="ECO:0007669"/>
    <property type="project" value="UniProtKB-KW"/>
</dbReference>
<dbReference type="GO" id="GO:0030259">
    <property type="term" value="P:lipid glycosylation"/>
    <property type="evidence" value="ECO:0007669"/>
    <property type="project" value="UniProtKB-UniRule"/>
</dbReference>
<dbReference type="GO" id="GO:0009252">
    <property type="term" value="P:peptidoglycan biosynthetic process"/>
    <property type="evidence" value="ECO:0007669"/>
    <property type="project" value="UniProtKB-UniRule"/>
</dbReference>
<dbReference type="GO" id="GO:0008360">
    <property type="term" value="P:regulation of cell shape"/>
    <property type="evidence" value="ECO:0007669"/>
    <property type="project" value="UniProtKB-KW"/>
</dbReference>
<dbReference type="CDD" id="cd03785">
    <property type="entry name" value="GT28_MurG"/>
    <property type="match status" value="1"/>
</dbReference>
<dbReference type="Gene3D" id="3.40.50.2000">
    <property type="entry name" value="Glycogen Phosphorylase B"/>
    <property type="match status" value="2"/>
</dbReference>
<dbReference type="HAMAP" id="MF_00033">
    <property type="entry name" value="MurG"/>
    <property type="match status" value="1"/>
</dbReference>
<dbReference type="InterPro" id="IPR006009">
    <property type="entry name" value="GlcNAc_MurG"/>
</dbReference>
<dbReference type="InterPro" id="IPR007235">
    <property type="entry name" value="Glyco_trans_28_C"/>
</dbReference>
<dbReference type="InterPro" id="IPR004276">
    <property type="entry name" value="GlycoTrans_28_N"/>
</dbReference>
<dbReference type="NCBIfam" id="TIGR01133">
    <property type="entry name" value="murG"/>
    <property type="match status" value="1"/>
</dbReference>
<dbReference type="PANTHER" id="PTHR21015:SF22">
    <property type="entry name" value="GLYCOSYLTRANSFERASE"/>
    <property type="match status" value="1"/>
</dbReference>
<dbReference type="PANTHER" id="PTHR21015">
    <property type="entry name" value="UDP-N-ACETYLGLUCOSAMINE--N-ACETYLMURAMYL-(PENTAPEPTIDE) PYROPHOSPHORYL-UNDECAPRENOL N-ACETYLGLUCOSAMINE TRANSFERASE 1"/>
    <property type="match status" value="1"/>
</dbReference>
<dbReference type="Pfam" id="PF04101">
    <property type="entry name" value="Glyco_tran_28_C"/>
    <property type="match status" value="1"/>
</dbReference>
<dbReference type="Pfam" id="PF03033">
    <property type="entry name" value="Glyco_transf_28"/>
    <property type="match status" value="1"/>
</dbReference>
<dbReference type="SUPFAM" id="SSF53756">
    <property type="entry name" value="UDP-Glycosyltransferase/glycogen phosphorylase"/>
    <property type="match status" value="1"/>
</dbReference>
<sequence length="408" mass="41694">MNDTVKKPTGGRGDDPLPAGAALSAVAPHEPVSVVLAGGGTAGHVEPAMAVADALKALDPNVRITSLGTARGLETRLVPERGYDLELITPVPLPRKPTGDLARLPSRVWRAVRETRAVLHAVDADVVIGFGGYVALPAYLAARGVSPRKPRVPVVIHEANASAGLANRVGARTAQRVLSAVADCGLPGAEVVGVPVREAITSLDRAAVRAEARRHFGFADDARVLLVFGGSQGAASLNRAVSGAAAQLAAAGVSVLHAHGPKNTLDLREPQPGDPPYVAVPYLDRMDLAYAAADLVICRSGAMTVAEVSAVGLPAIYVPLPIGNGEQRLNALPVVNAGGGMVVADADLTPELVAREVAGLVGDPPRLAAMTTAAARVGHPDAARRVAQAALDIGRTARRARGATGGRP</sequence>
<protein>
    <recommendedName>
        <fullName evidence="1">UDP-N-acetylglucosamine--N-acetylmuramyl-(pentapeptide) pyrophosphoryl-undecaprenol N-acetylglucosamine transferase</fullName>
        <ecNumber evidence="1">2.4.1.227</ecNumber>
    </recommendedName>
    <alternativeName>
        <fullName evidence="1">Undecaprenyl-PP-MurNAc-pentapeptide-UDPGlcNAc GlcNAc transferase</fullName>
    </alternativeName>
</protein>
<gene>
    <name evidence="1" type="primary">murG</name>
    <name type="ordered locus">MAV_2336</name>
</gene>
<organism>
    <name type="scientific">Mycobacterium avium (strain 104)</name>
    <dbReference type="NCBI Taxonomy" id="243243"/>
    <lineage>
        <taxon>Bacteria</taxon>
        <taxon>Bacillati</taxon>
        <taxon>Actinomycetota</taxon>
        <taxon>Actinomycetes</taxon>
        <taxon>Mycobacteriales</taxon>
        <taxon>Mycobacteriaceae</taxon>
        <taxon>Mycobacterium</taxon>
        <taxon>Mycobacterium avium complex (MAC)</taxon>
    </lineage>
</organism>
<proteinExistence type="inferred from homology"/>
<evidence type="ECO:0000255" key="1">
    <source>
        <dbReference type="HAMAP-Rule" id="MF_00033"/>
    </source>
</evidence>
<evidence type="ECO:0000256" key="2">
    <source>
        <dbReference type="SAM" id="MobiDB-lite"/>
    </source>
</evidence>
<feature type="chain" id="PRO_1000002669" description="UDP-N-acetylglucosamine--N-acetylmuramyl-(pentapeptide) pyrophosphoryl-undecaprenol N-acetylglucosamine transferase">
    <location>
        <begin position="1"/>
        <end position="408"/>
    </location>
</feature>
<feature type="region of interest" description="Disordered" evidence="2">
    <location>
        <begin position="1"/>
        <end position="20"/>
    </location>
</feature>
<feature type="binding site" evidence="1">
    <location>
        <begin position="41"/>
        <end position="43"/>
    </location>
    <ligand>
        <name>UDP-N-acetyl-alpha-D-glucosamine</name>
        <dbReference type="ChEBI" id="CHEBI:57705"/>
    </ligand>
</feature>
<feature type="binding site" evidence="1">
    <location>
        <position position="160"/>
    </location>
    <ligand>
        <name>UDP-N-acetyl-alpha-D-glucosamine</name>
        <dbReference type="ChEBI" id="CHEBI:57705"/>
    </ligand>
</feature>
<feature type="binding site" evidence="1">
    <location>
        <position position="197"/>
    </location>
    <ligand>
        <name>UDP-N-acetyl-alpha-D-glucosamine</name>
        <dbReference type="ChEBI" id="CHEBI:57705"/>
    </ligand>
</feature>
<feature type="binding site" evidence="1">
    <location>
        <position position="231"/>
    </location>
    <ligand>
        <name>UDP-N-acetyl-alpha-D-glucosamine</name>
        <dbReference type="ChEBI" id="CHEBI:57705"/>
    </ligand>
</feature>
<feature type="binding site" evidence="1">
    <location>
        <position position="327"/>
    </location>
    <ligand>
        <name>UDP-N-acetyl-alpha-D-glucosamine</name>
        <dbReference type="ChEBI" id="CHEBI:57705"/>
    </ligand>
</feature>
<comment type="function">
    <text evidence="1">Cell wall formation. Catalyzes the transfer of a GlcNAc subunit on undecaprenyl-pyrophosphoryl-MurNAc-pentapeptide (lipid intermediate I) to form undecaprenyl-pyrophosphoryl-MurNAc-(pentapeptide)GlcNAc (lipid intermediate II).</text>
</comment>
<comment type="catalytic activity">
    <reaction evidence="1">
        <text>di-trans,octa-cis-undecaprenyl diphospho-N-acetyl-alpha-D-muramoyl-L-alanyl-D-glutamyl-meso-2,6-diaminopimeloyl-D-alanyl-D-alanine + UDP-N-acetyl-alpha-D-glucosamine = di-trans,octa-cis-undecaprenyl diphospho-[N-acetyl-alpha-D-glucosaminyl-(1-&gt;4)]-N-acetyl-alpha-D-muramoyl-L-alanyl-D-glutamyl-meso-2,6-diaminopimeloyl-D-alanyl-D-alanine + UDP + H(+)</text>
        <dbReference type="Rhea" id="RHEA:31227"/>
        <dbReference type="ChEBI" id="CHEBI:15378"/>
        <dbReference type="ChEBI" id="CHEBI:57705"/>
        <dbReference type="ChEBI" id="CHEBI:58223"/>
        <dbReference type="ChEBI" id="CHEBI:61387"/>
        <dbReference type="ChEBI" id="CHEBI:61388"/>
        <dbReference type="EC" id="2.4.1.227"/>
    </reaction>
</comment>
<comment type="pathway">
    <text evidence="1">Cell wall biogenesis; peptidoglycan biosynthesis.</text>
</comment>
<comment type="subcellular location">
    <subcellularLocation>
        <location evidence="1">Cell membrane</location>
        <topology evidence="1">Peripheral membrane protein</topology>
        <orientation evidence="1">Cytoplasmic side</orientation>
    </subcellularLocation>
</comment>
<comment type="similarity">
    <text evidence="1">Belongs to the glycosyltransferase 28 family. MurG subfamily.</text>
</comment>
<keyword id="KW-0131">Cell cycle</keyword>
<keyword id="KW-0132">Cell division</keyword>
<keyword id="KW-1003">Cell membrane</keyword>
<keyword id="KW-0133">Cell shape</keyword>
<keyword id="KW-0961">Cell wall biogenesis/degradation</keyword>
<keyword id="KW-0328">Glycosyltransferase</keyword>
<keyword id="KW-0472">Membrane</keyword>
<keyword id="KW-0573">Peptidoglycan synthesis</keyword>
<keyword id="KW-0808">Transferase</keyword>
<name>MURG_MYCA1</name>
<reference key="1">
    <citation type="submission" date="2006-10" db="EMBL/GenBank/DDBJ databases">
        <authorList>
            <person name="Fleischmann R.D."/>
            <person name="Dodson R.J."/>
            <person name="Haft D.H."/>
            <person name="Merkel J.S."/>
            <person name="Nelson W.C."/>
            <person name="Fraser C.M."/>
        </authorList>
    </citation>
    <scope>NUCLEOTIDE SEQUENCE [LARGE SCALE GENOMIC DNA]</scope>
    <source>
        <strain>104</strain>
    </source>
</reference>